<keyword id="KW-0456">Lyase</keyword>
<keyword id="KW-0501">Molybdenum cofactor biosynthesis</keyword>
<keyword id="KW-1185">Reference proteome</keyword>
<evidence type="ECO:0000255" key="1">
    <source>
        <dbReference type="HAMAP-Rule" id="MF_01224"/>
    </source>
</evidence>
<proteinExistence type="inferred from homology"/>
<protein>
    <recommendedName>
        <fullName evidence="1">Cyclic pyranopterin monophosphate synthase</fullName>
        <ecNumber evidence="1">4.6.1.17</ecNumber>
    </recommendedName>
    <alternativeName>
        <fullName evidence="1">Molybdenum cofactor biosynthesis protein C</fullName>
    </alternativeName>
</protein>
<dbReference type="EC" id="4.6.1.17" evidence="1"/>
<dbReference type="EMBL" id="CP000613">
    <property type="protein sequence ID" value="ACI97551.1"/>
    <property type="molecule type" value="Genomic_DNA"/>
</dbReference>
<dbReference type="RefSeq" id="WP_012565342.1">
    <property type="nucleotide sequence ID" value="NC_011420.2"/>
</dbReference>
<dbReference type="SMR" id="B6IQ15"/>
<dbReference type="STRING" id="414684.RC1_0102"/>
<dbReference type="KEGG" id="rce:RC1_0102"/>
<dbReference type="eggNOG" id="COG0315">
    <property type="taxonomic scope" value="Bacteria"/>
</dbReference>
<dbReference type="HOGENOM" id="CLU_074693_1_1_5"/>
<dbReference type="OrthoDB" id="9794429at2"/>
<dbReference type="UniPathway" id="UPA00344"/>
<dbReference type="Proteomes" id="UP000001591">
    <property type="component" value="Chromosome"/>
</dbReference>
<dbReference type="GO" id="GO:0061799">
    <property type="term" value="F:cyclic pyranopterin monophosphate synthase activity"/>
    <property type="evidence" value="ECO:0007669"/>
    <property type="project" value="UniProtKB-UniRule"/>
</dbReference>
<dbReference type="GO" id="GO:0006777">
    <property type="term" value="P:Mo-molybdopterin cofactor biosynthetic process"/>
    <property type="evidence" value="ECO:0007669"/>
    <property type="project" value="UniProtKB-UniRule"/>
</dbReference>
<dbReference type="CDD" id="cd01420">
    <property type="entry name" value="MoaC_PE"/>
    <property type="match status" value="1"/>
</dbReference>
<dbReference type="FunFam" id="3.30.70.640:FF:000001">
    <property type="entry name" value="Cyclic pyranopterin monophosphate synthase"/>
    <property type="match status" value="1"/>
</dbReference>
<dbReference type="Gene3D" id="3.30.70.640">
    <property type="entry name" value="Molybdopterin cofactor biosynthesis C (MoaC) domain"/>
    <property type="match status" value="1"/>
</dbReference>
<dbReference type="HAMAP" id="MF_01224_B">
    <property type="entry name" value="MoaC_B"/>
    <property type="match status" value="1"/>
</dbReference>
<dbReference type="InterPro" id="IPR023045">
    <property type="entry name" value="MoaC"/>
</dbReference>
<dbReference type="InterPro" id="IPR047594">
    <property type="entry name" value="MoaC_bact/euk"/>
</dbReference>
<dbReference type="InterPro" id="IPR036522">
    <property type="entry name" value="MoaC_sf"/>
</dbReference>
<dbReference type="InterPro" id="IPR050105">
    <property type="entry name" value="MoCo_biosynth_MoaA/MoaC"/>
</dbReference>
<dbReference type="InterPro" id="IPR002820">
    <property type="entry name" value="Mopterin_CF_biosynth-C_dom"/>
</dbReference>
<dbReference type="NCBIfam" id="TIGR00581">
    <property type="entry name" value="moaC"/>
    <property type="match status" value="1"/>
</dbReference>
<dbReference type="NCBIfam" id="NF006870">
    <property type="entry name" value="PRK09364.1"/>
    <property type="match status" value="1"/>
</dbReference>
<dbReference type="PANTHER" id="PTHR22960:SF29">
    <property type="entry name" value="CYCLIC PYRANOPTERIN MONOPHOSPHATE SYNTHASE"/>
    <property type="match status" value="1"/>
</dbReference>
<dbReference type="PANTHER" id="PTHR22960">
    <property type="entry name" value="MOLYBDOPTERIN COFACTOR SYNTHESIS PROTEIN A"/>
    <property type="match status" value="1"/>
</dbReference>
<dbReference type="Pfam" id="PF01967">
    <property type="entry name" value="MoaC"/>
    <property type="match status" value="1"/>
</dbReference>
<dbReference type="SUPFAM" id="SSF55040">
    <property type="entry name" value="Molybdenum cofactor biosynthesis protein C, MoaC"/>
    <property type="match status" value="1"/>
</dbReference>
<sequence length="169" mass="17497">MGTGDPGGAPRLTHFDEHGNAAMVDVSAKAETERVATAEALVSMRPETFALIESGGIAKGDVLGVARIAGIMAAKRTADLIPLCHPLALSRVAVDFALLPDRPAVRIEATVTLKGRTGVEMEALTAVSVAALTLYDMCKAVDRGMTIGGIRLLHKSGGKSGTYRAGDEA</sequence>
<accession>B6IQ15</accession>
<reference key="1">
    <citation type="submission" date="2007-03" db="EMBL/GenBank/DDBJ databases">
        <title>Genome sequence of Rhodospirillum centenum.</title>
        <authorList>
            <person name="Touchman J.W."/>
            <person name="Bauer C."/>
            <person name="Blankenship R.E."/>
        </authorList>
    </citation>
    <scope>NUCLEOTIDE SEQUENCE [LARGE SCALE GENOMIC DNA]</scope>
    <source>
        <strain>ATCC 51521 / SW</strain>
    </source>
</reference>
<organism>
    <name type="scientific">Rhodospirillum centenum (strain ATCC 51521 / SW)</name>
    <dbReference type="NCBI Taxonomy" id="414684"/>
    <lineage>
        <taxon>Bacteria</taxon>
        <taxon>Pseudomonadati</taxon>
        <taxon>Pseudomonadota</taxon>
        <taxon>Alphaproteobacteria</taxon>
        <taxon>Rhodospirillales</taxon>
        <taxon>Rhodospirillaceae</taxon>
        <taxon>Rhodospirillum</taxon>
    </lineage>
</organism>
<gene>
    <name evidence="1" type="primary">moaC</name>
    <name type="ordered locus">RC1_0102</name>
</gene>
<comment type="function">
    <text evidence="1">Catalyzes the conversion of (8S)-3',8-cyclo-7,8-dihydroguanosine 5'-triphosphate to cyclic pyranopterin monophosphate (cPMP).</text>
</comment>
<comment type="catalytic activity">
    <reaction evidence="1">
        <text>(8S)-3',8-cyclo-7,8-dihydroguanosine 5'-triphosphate = cyclic pyranopterin phosphate + diphosphate</text>
        <dbReference type="Rhea" id="RHEA:49580"/>
        <dbReference type="ChEBI" id="CHEBI:33019"/>
        <dbReference type="ChEBI" id="CHEBI:59648"/>
        <dbReference type="ChEBI" id="CHEBI:131766"/>
        <dbReference type="EC" id="4.6.1.17"/>
    </reaction>
</comment>
<comment type="pathway">
    <text evidence="1">Cofactor biosynthesis; molybdopterin biosynthesis.</text>
</comment>
<comment type="subunit">
    <text evidence="1">Homohexamer; trimer of dimers.</text>
</comment>
<comment type="similarity">
    <text evidence="1">Belongs to the MoaC family.</text>
</comment>
<name>MOAC_RHOCS</name>
<feature type="chain" id="PRO_1000139288" description="Cyclic pyranopterin monophosphate synthase">
    <location>
        <begin position="1"/>
        <end position="169"/>
    </location>
</feature>
<feature type="active site" evidence="1">
    <location>
        <position position="136"/>
    </location>
</feature>
<feature type="binding site" evidence="1">
    <location>
        <begin position="83"/>
        <end position="85"/>
    </location>
    <ligand>
        <name>substrate</name>
    </ligand>
</feature>
<feature type="binding site" evidence="1">
    <location>
        <begin position="121"/>
        <end position="122"/>
    </location>
    <ligand>
        <name>substrate</name>
    </ligand>
</feature>